<dbReference type="EC" id="3.1.11.6" evidence="1"/>
<dbReference type="EMBL" id="CP000232">
    <property type="protein sequence ID" value="ABC19823.1"/>
    <property type="molecule type" value="Genomic_DNA"/>
</dbReference>
<dbReference type="RefSeq" id="YP_430366.1">
    <property type="nucleotide sequence ID" value="NC_007644.1"/>
</dbReference>
<dbReference type="SMR" id="Q2RIB6"/>
<dbReference type="STRING" id="264732.Moth_1514"/>
<dbReference type="EnsemblBacteria" id="ABC19823">
    <property type="protein sequence ID" value="ABC19823"/>
    <property type="gene ID" value="Moth_1514"/>
</dbReference>
<dbReference type="KEGG" id="mta:Moth_1514"/>
<dbReference type="PATRIC" id="fig|264732.11.peg.1640"/>
<dbReference type="eggNOG" id="COG1722">
    <property type="taxonomic scope" value="Bacteria"/>
</dbReference>
<dbReference type="HOGENOM" id="CLU_145918_3_1_9"/>
<dbReference type="OrthoDB" id="1697399at2"/>
<dbReference type="GO" id="GO:0005829">
    <property type="term" value="C:cytosol"/>
    <property type="evidence" value="ECO:0007669"/>
    <property type="project" value="TreeGrafter"/>
</dbReference>
<dbReference type="GO" id="GO:0009318">
    <property type="term" value="C:exodeoxyribonuclease VII complex"/>
    <property type="evidence" value="ECO:0007669"/>
    <property type="project" value="InterPro"/>
</dbReference>
<dbReference type="GO" id="GO:0008855">
    <property type="term" value="F:exodeoxyribonuclease VII activity"/>
    <property type="evidence" value="ECO:0007669"/>
    <property type="project" value="UniProtKB-UniRule"/>
</dbReference>
<dbReference type="GO" id="GO:0006308">
    <property type="term" value="P:DNA catabolic process"/>
    <property type="evidence" value="ECO:0007669"/>
    <property type="project" value="UniProtKB-UniRule"/>
</dbReference>
<dbReference type="Gene3D" id="1.10.287.1040">
    <property type="entry name" value="Exonuclease VII, small subunit"/>
    <property type="match status" value="1"/>
</dbReference>
<dbReference type="HAMAP" id="MF_00337">
    <property type="entry name" value="Exonuc_7_S"/>
    <property type="match status" value="1"/>
</dbReference>
<dbReference type="InterPro" id="IPR003761">
    <property type="entry name" value="Exonuc_VII_S"/>
</dbReference>
<dbReference type="InterPro" id="IPR037004">
    <property type="entry name" value="Exonuc_VII_ssu_sf"/>
</dbReference>
<dbReference type="NCBIfam" id="TIGR01280">
    <property type="entry name" value="xseB"/>
    <property type="match status" value="1"/>
</dbReference>
<dbReference type="PANTHER" id="PTHR34137">
    <property type="entry name" value="EXODEOXYRIBONUCLEASE 7 SMALL SUBUNIT"/>
    <property type="match status" value="1"/>
</dbReference>
<dbReference type="PANTHER" id="PTHR34137:SF1">
    <property type="entry name" value="EXODEOXYRIBONUCLEASE 7 SMALL SUBUNIT"/>
    <property type="match status" value="1"/>
</dbReference>
<dbReference type="Pfam" id="PF02609">
    <property type="entry name" value="Exonuc_VII_S"/>
    <property type="match status" value="1"/>
</dbReference>
<dbReference type="SUPFAM" id="SSF116842">
    <property type="entry name" value="XseB-like"/>
    <property type="match status" value="1"/>
</dbReference>
<gene>
    <name evidence="1" type="primary">xseB</name>
    <name type="ordered locus">Moth_1514</name>
</gene>
<evidence type="ECO:0000255" key="1">
    <source>
        <dbReference type="HAMAP-Rule" id="MF_00337"/>
    </source>
</evidence>
<sequence>MPEEEQLTFEAALQKLEEVVQALEGEGLTLEDSLAYYQEGIRLVRLCRQRLKEVEGKLQVILLQDGEVVTRELSLPGGENHGT</sequence>
<proteinExistence type="inferred from homology"/>
<comment type="function">
    <text evidence="1">Bidirectionally degrades single-stranded DNA into large acid-insoluble oligonucleotides, which are then degraded further into small acid-soluble oligonucleotides.</text>
</comment>
<comment type="catalytic activity">
    <reaction evidence="1">
        <text>Exonucleolytic cleavage in either 5'- to 3'- or 3'- to 5'-direction to yield nucleoside 5'-phosphates.</text>
        <dbReference type="EC" id="3.1.11.6"/>
    </reaction>
</comment>
<comment type="subunit">
    <text evidence="1">Heterooligomer composed of large and small subunits.</text>
</comment>
<comment type="subcellular location">
    <subcellularLocation>
        <location evidence="1">Cytoplasm</location>
    </subcellularLocation>
</comment>
<comment type="similarity">
    <text evidence="1">Belongs to the XseB family.</text>
</comment>
<reference key="1">
    <citation type="journal article" date="2008" name="Environ. Microbiol.">
        <title>The complete genome sequence of Moorella thermoacetica (f. Clostridium thermoaceticum).</title>
        <authorList>
            <person name="Pierce E."/>
            <person name="Xie G."/>
            <person name="Barabote R.D."/>
            <person name="Saunders E."/>
            <person name="Han C.S."/>
            <person name="Detter J.C."/>
            <person name="Richardson P."/>
            <person name="Brettin T.S."/>
            <person name="Das A."/>
            <person name="Ljungdahl L.G."/>
            <person name="Ragsdale S.W."/>
        </authorList>
    </citation>
    <scope>NUCLEOTIDE SEQUENCE [LARGE SCALE GENOMIC DNA]</scope>
    <source>
        <strain>ATCC 39073 / JCM 9320</strain>
    </source>
</reference>
<organism>
    <name type="scientific">Moorella thermoacetica (strain ATCC 39073 / JCM 9320)</name>
    <dbReference type="NCBI Taxonomy" id="264732"/>
    <lineage>
        <taxon>Bacteria</taxon>
        <taxon>Bacillati</taxon>
        <taxon>Bacillota</taxon>
        <taxon>Clostridia</taxon>
        <taxon>Moorellales</taxon>
        <taxon>Moorellaceae</taxon>
        <taxon>Moorella</taxon>
    </lineage>
</organism>
<accession>Q2RIB6</accession>
<name>EX7S_MOOTA</name>
<protein>
    <recommendedName>
        <fullName evidence="1">Exodeoxyribonuclease 7 small subunit</fullName>
        <ecNumber evidence="1">3.1.11.6</ecNumber>
    </recommendedName>
    <alternativeName>
        <fullName evidence="1">Exodeoxyribonuclease VII small subunit</fullName>
        <shortName evidence="1">Exonuclease VII small subunit</shortName>
    </alternativeName>
</protein>
<feature type="chain" id="PRO_1000079287" description="Exodeoxyribonuclease 7 small subunit">
    <location>
        <begin position="1"/>
        <end position="83"/>
    </location>
</feature>
<keyword id="KW-0963">Cytoplasm</keyword>
<keyword id="KW-0269">Exonuclease</keyword>
<keyword id="KW-0378">Hydrolase</keyword>
<keyword id="KW-0540">Nuclease</keyword>